<feature type="chain" id="PRO_0000057614" description="Hydroxymethylglutaryl-CoA synthase">
    <location>
        <begin position="1"/>
        <end position="345"/>
    </location>
</feature>
<feature type="active site" description="Proton donor/acceptor" evidence="1">
    <location>
        <position position="80"/>
    </location>
</feature>
<feature type="active site" description="Acyl-thioester intermediate" evidence="1">
    <location>
        <position position="112"/>
    </location>
</feature>
<feature type="active site" description="Proton donor/acceptor" evidence="1">
    <location>
        <position position="234"/>
    </location>
</feature>
<feature type="binding site" evidence="1">
    <location>
        <position position="28"/>
    </location>
    <ligand>
        <name>(3S)-3-hydroxy-3-methylglutaryl-CoA</name>
        <dbReference type="ChEBI" id="CHEBI:43074"/>
    </ligand>
</feature>
<feature type="binding site" evidence="1">
    <location>
        <position position="112"/>
    </location>
    <ligand>
        <name>(3S)-3-hydroxy-3-methylglutaryl-CoA</name>
        <dbReference type="ChEBI" id="CHEBI:43074"/>
    </ligand>
</feature>
<feature type="binding site" evidence="1">
    <location>
        <position position="153"/>
    </location>
    <ligand>
        <name>(3S)-3-hydroxy-3-methylglutaryl-CoA</name>
        <dbReference type="ChEBI" id="CHEBI:43074"/>
    </ligand>
</feature>
<feature type="binding site" evidence="1">
    <location>
        <position position="199"/>
    </location>
    <ligand>
        <name>CoA</name>
        <dbReference type="ChEBI" id="CHEBI:57287"/>
        <note>ligand shared with acetoacetyl-CoA thiolase</note>
    </ligand>
</feature>
<feature type="binding site" evidence="1">
    <location>
        <position position="201"/>
    </location>
    <ligand>
        <name>(3S)-3-hydroxy-3-methylglutaryl-CoA</name>
        <dbReference type="ChEBI" id="CHEBI:43074"/>
    </ligand>
</feature>
<feature type="binding site" evidence="1">
    <location>
        <position position="234"/>
    </location>
    <ligand>
        <name>(3S)-3-hydroxy-3-methylglutaryl-CoA</name>
        <dbReference type="ChEBI" id="CHEBI:43074"/>
    </ligand>
</feature>
<feature type="binding site" evidence="1">
    <location>
        <position position="239"/>
    </location>
    <ligand>
        <name>CoA</name>
        <dbReference type="ChEBI" id="CHEBI:57287"/>
        <note>ligand shared with acetoacetyl-CoA thiolase</note>
    </ligand>
</feature>
<feature type="binding site" evidence="1">
    <location>
        <position position="243"/>
    </location>
    <ligand>
        <name>(3S)-3-hydroxy-3-methylglutaryl-CoA</name>
        <dbReference type="ChEBI" id="CHEBI:43074"/>
    </ligand>
</feature>
<feature type="binding site" evidence="1">
    <location>
        <position position="266"/>
    </location>
    <ligand>
        <name>(3S)-3-hydroxy-3-methylglutaryl-CoA</name>
        <dbReference type="ChEBI" id="CHEBI:43074"/>
    </ligand>
</feature>
<feature type="binding site" evidence="1">
    <location>
        <position position="296"/>
    </location>
    <ligand>
        <name>(3S)-3-hydroxy-3-methylglutaryl-CoA</name>
        <dbReference type="ChEBI" id="CHEBI:43074"/>
    </ligand>
</feature>
<dbReference type="EC" id="2.3.3.10" evidence="1"/>
<dbReference type="EMBL" id="L77117">
    <property type="protein sequence ID" value="AAB99564.1"/>
    <property type="molecule type" value="Genomic_DNA"/>
</dbReference>
<dbReference type="PIR" id="A64493">
    <property type="entry name" value="A64493"/>
</dbReference>
<dbReference type="RefSeq" id="WP_010871070.1">
    <property type="nucleotide sequence ID" value="NC_000909.1"/>
</dbReference>
<dbReference type="SMR" id="Q58941"/>
<dbReference type="FunCoup" id="Q58941">
    <property type="interactions" value="78"/>
</dbReference>
<dbReference type="STRING" id="243232.MJ_1546"/>
<dbReference type="PaxDb" id="243232-MJ_1546"/>
<dbReference type="EnsemblBacteria" id="AAB99564">
    <property type="protein sequence ID" value="AAB99564"/>
    <property type="gene ID" value="MJ_1546"/>
</dbReference>
<dbReference type="GeneID" id="1452454"/>
<dbReference type="KEGG" id="mja:MJ_1546"/>
<dbReference type="eggNOG" id="arCOG01767">
    <property type="taxonomic scope" value="Archaea"/>
</dbReference>
<dbReference type="HOGENOM" id="CLU_039592_7_0_2"/>
<dbReference type="InParanoid" id="Q58941"/>
<dbReference type="OrthoDB" id="5812at2157"/>
<dbReference type="PhylomeDB" id="Q58941"/>
<dbReference type="UniPathway" id="UPA00058">
    <property type="reaction ID" value="UER00102"/>
</dbReference>
<dbReference type="Proteomes" id="UP000000805">
    <property type="component" value="Chromosome"/>
</dbReference>
<dbReference type="GO" id="GO:0003985">
    <property type="term" value="F:acetyl-CoA C-acetyltransferase activity"/>
    <property type="evidence" value="ECO:0007669"/>
    <property type="project" value="UniProtKB-UniRule"/>
</dbReference>
<dbReference type="GO" id="GO:0004421">
    <property type="term" value="F:hydroxymethylglutaryl-CoA synthase activity"/>
    <property type="evidence" value="ECO:0000318"/>
    <property type="project" value="GO_Central"/>
</dbReference>
<dbReference type="GO" id="GO:0006084">
    <property type="term" value="P:acetyl-CoA metabolic process"/>
    <property type="evidence" value="ECO:0000318"/>
    <property type="project" value="GO_Central"/>
</dbReference>
<dbReference type="GO" id="GO:0010142">
    <property type="term" value="P:farnesyl diphosphate biosynthetic process, mevalonate pathway"/>
    <property type="evidence" value="ECO:0000318"/>
    <property type="project" value="GO_Central"/>
</dbReference>
<dbReference type="GO" id="GO:0019287">
    <property type="term" value="P:isopentenyl diphosphate biosynthetic process, mevalonate pathway"/>
    <property type="evidence" value="ECO:0007669"/>
    <property type="project" value="UniProtKB-UniRule"/>
</dbReference>
<dbReference type="CDD" id="cd00827">
    <property type="entry name" value="init_cond_enzymes"/>
    <property type="match status" value="1"/>
</dbReference>
<dbReference type="FunFam" id="3.40.47.10:FF:000046">
    <property type="entry name" value="UPF0219 protein M1627_1703"/>
    <property type="match status" value="1"/>
</dbReference>
<dbReference type="Gene3D" id="3.40.47.10">
    <property type="match status" value="1"/>
</dbReference>
<dbReference type="HAMAP" id="MF_01409">
    <property type="entry name" value="HMG_CoA_synth_arch"/>
    <property type="match status" value="1"/>
</dbReference>
<dbReference type="InterPro" id="IPR013747">
    <property type="entry name" value="ACP_syn_III_C"/>
</dbReference>
<dbReference type="InterPro" id="IPR004656">
    <property type="entry name" value="HMG_CoA_Synthase"/>
</dbReference>
<dbReference type="InterPro" id="IPR016039">
    <property type="entry name" value="Thiolase-like"/>
</dbReference>
<dbReference type="NCBIfam" id="TIGR00748">
    <property type="entry name" value="HMG_CoA_syn_Arc"/>
    <property type="match status" value="1"/>
</dbReference>
<dbReference type="NCBIfam" id="NF003274">
    <property type="entry name" value="PRK04262.1"/>
    <property type="match status" value="1"/>
</dbReference>
<dbReference type="PANTHER" id="PTHR43323">
    <property type="entry name" value="3-HYDROXY-3-METHYLGLUTARYL COENZYME A SYNTHASE"/>
    <property type="match status" value="1"/>
</dbReference>
<dbReference type="PANTHER" id="PTHR43323:SF2">
    <property type="entry name" value="HYDROXYMETHYLGLUTARYL-COA SYNTHASE"/>
    <property type="match status" value="1"/>
</dbReference>
<dbReference type="Pfam" id="PF08541">
    <property type="entry name" value="ACP_syn_III_C"/>
    <property type="match status" value="1"/>
</dbReference>
<dbReference type="SUPFAM" id="SSF53901">
    <property type="entry name" value="Thiolase-like"/>
    <property type="match status" value="2"/>
</dbReference>
<sequence length="345" mass="37549">MAGIVGYGAYIPKYRIKVEEIARVWNKDPESIKKGLLVYEKAVPSLDEDTATIAVEAARNALKRAEIDPKDIGAVYVGSESHPYAVKPTATIVAEAIDATPDLTAADLEFACKAGTAGIQMCMGLVESGLIKYGLAIGADTAQGAPGDALEYTAAAGGAAYIIGKSNVIAEFNGTYSYTTDTPDFWRREGKPYPRHGGRFTGEPAYFRHVINAAKGLMEKMGTKPEDYDYCVFHQPNGKFYIRVAKILGFKEEQYKIGLLTPYIGNTYSGAVPLGLSNVLDNCEGGERILAVSYGSGAGSDAFDITVTDRINKVKDKAPKTAYYLERKEYIDYAIYAKFRKKIKM</sequence>
<comment type="function">
    <text evidence="1">Catalyzes the condensation of acetyl-CoA with acetoacetyl-CoA to form 3-hydroxy-3-methylglutaryl-CoA (HMG-CoA). Functions in the mevalonate (MVA) pathway leading to isopentenyl diphosphate (IPP), a key precursor for the biosynthesis of isoprenoid compounds that are building blocks of archaeal membrane lipids.</text>
</comment>
<comment type="catalytic activity">
    <reaction evidence="1">
        <text>acetoacetyl-CoA + acetyl-CoA + H2O = (3S)-3-hydroxy-3-methylglutaryl-CoA + CoA + H(+)</text>
        <dbReference type="Rhea" id="RHEA:10188"/>
        <dbReference type="ChEBI" id="CHEBI:15377"/>
        <dbReference type="ChEBI" id="CHEBI:15378"/>
        <dbReference type="ChEBI" id="CHEBI:43074"/>
        <dbReference type="ChEBI" id="CHEBI:57286"/>
        <dbReference type="ChEBI" id="CHEBI:57287"/>
        <dbReference type="ChEBI" id="CHEBI:57288"/>
        <dbReference type="EC" id="2.3.3.10"/>
    </reaction>
    <physiologicalReaction direction="left-to-right" evidence="1">
        <dbReference type="Rhea" id="RHEA:10189"/>
    </physiologicalReaction>
</comment>
<comment type="pathway">
    <text evidence="1">Metabolic intermediate biosynthesis; (R)-mevalonate biosynthesis; (R)-mevalonate from acetyl-CoA: step 2/3.</text>
</comment>
<comment type="subunit">
    <text evidence="1">Interacts with acetoacetyl-CoA thiolase that catalyzes the precedent step in the pathway and with a DUF35 protein. The acetoacetyl-CoA thiolase/HMG-CoA synthase complex channels the intermediate via a fused CoA-binding site, which allows for efficient coupling of the endergonic thiolase reaction with the exergonic HMGCS reaction.</text>
</comment>
<comment type="similarity">
    <text evidence="1">Belongs to the thiolase-like superfamily. Archaeal HMG-CoA synthase family.</text>
</comment>
<evidence type="ECO:0000255" key="1">
    <source>
        <dbReference type="HAMAP-Rule" id="MF_01409"/>
    </source>
</evidence>
<gene>
    <name type="ordered locus">MJ1546</name>
</gene>
<proteinExistence type="inferred from homology"/>
<name>HMGCS_METJA</name>
<organism>
    <name type="scientific">Methanocaldococcus jannaschii (strain ATCC 43067 / DSM 2661 / JAL-1 / JCM 10045 / NBRC 100440)</name>
    <name type="common">Methanococcus jannaschii</name>
    <dbReference type="NCBI Taxonomy" id="243232"/>
    <lineage>
        <taxon>Archaea</taxon>
        <taxon>Methanobacteriati</taxon>
        <taxon>Methanobacteriota</taxon>
        <taxon>Methanomada group</taxon>
        <taxon>Methanococci</taxon>
        <taxon>Methanococcales</taxon>
        <taxon>Methanocaldococcaceae</taxon>
        <taxon>Methanocaldococcus</taxon>
    </lineage>
</organism>
<protein>
    <recommendedName>
        <fullName evidence="1">Hydroxymethylglutaryl-CoA synthase</fullName>
        <shortName evidence="1">HMG-CoA synthase</shortName>
        <shortName evidence="1">HMGCS</shortName>
        <ecNumber evidence="1">2.3.3.10</ecNumber>
    </recommendedName>
</protein>
<accession>Q58941</accession>
<reference key="1">
    <citation type="journal article" date="1996" name="Science">
        <title>Complete genome sequence of the methanogenic archaeon, Methanococcus jannaschii.</title>
        <authorList>
            <person name="Bult C.J."/>
            <person name="White O."/>
            <person name="Olsen G.J."/>
            <person name="Zhou L."/>
            <person name="Fleischmann R.D."/>
            <person name="Sutton G.G."/>
            <person name="Blake J.A."/>
            <person name="FitzGerald L.M."/>
            <person name="Clayton R.A."/>
            <person name="Gocayne J.D."/>
            <person name="Kerlavage A.R."/>
            <person name="Dougherty B.A."/>
            <person name="Tomb J.-F."/>
            <person name="Adams M.D."/>
            <person name="Reich C.I."/>
            <person name="Overbeek R."/>
            <person name="Kirkness E.F."/>
            <person name="Weinstock K.G."/>
            <person name="Merrick J.M."/>
            <person name="Glodek A."/>
            <person name="Scott J.L."/>
            <person name="Geoghagen N.S.M."/>
            <person name="Weidman J.F."/>
            <person name="Fuhrmann J.L."/>
            <person name="Nguyen D."/>
            <person name="Utterback T.R."/>
            <person name="Kelley J.M."/>
            <person name="Peterson J.D."/>
            <person name="Sadow P.W."/>
            <person name="Hanna M.C."/>
            <person name="Cotton M.D."/>
            <person name="Roberts K.M."/>
            <person name="Hurst M.A."/>
            <person name="Kaine B.P."/>
            <person name="Borodovsky M."/>
            <person name="Klenk H.-P."/>
            <person name="Fraser C.M."/>
            <person name="Smith H.O."/>
            <person name="Woese C.R."/>
            <person name="Venter J.C."/>
        </authorList>
    </citation>
    <scope>NUCLEOTIDE SEQUENCE [LARGE SCALE GENOMIC DNA]</scope>
    <source>
        <strain>ATCC 43067 / DSM 2661 / JAL-1 / JCM 10045 / NBRC 100440</strain>
    </source>
</reference>
<keyword id="KW-0012">Acyltransferase</keyword>
<keyword id="KW-0414">Isoprene biosynthesis</keyword>
<keyword id="KW-1185">Reference proteome</keyword>
<keyword id="KW-0808">Transferase</keyword>